<organism>
    <name type="scientific">Homo sapiens</name>
    <name type="common">Human</name>
    <dbReference type="NCBI Taxonomy" id="9606"/>
    <lineage>
        <taxon>Eukaryota</taxon>
        <taxon>Metazoa</taxon>
        <taxon>Chordata</taxon>
        <taxon>Craniata</taxon>
        <taxon>Vertebrata</taxon>
        <taxon>Euteleostomi</taxon>
        <taxon>Mammalia</taxon>
        <taxon>Eutheria</taxon>
        <taxon>Euarchontoglires</taxon>
        <taxon>Primates</taxon>
        <taxon>Haplorrhini</taxon>
        <taxon>Catarrhini</taxon>
        <taxon>Hominidae</taxon>
        <taxon>Homo</taxon>
    </lineage>
</organism>
<gene>
    <name type="primary">RABAC1</name>
    <name type="synonym">PRA1</name>
    <name type="synonym">PRAF1</name>
</gene>
<accession>Q9UI14</accession>
<accession>Q7Z4Y2</accession>
<accession>Q9Y3R1</accession>
<keyword id="KW-1003">Cell membrane</keyword>
<keyword id="KW-0963">Cytoplasm</keyword>
<keyword id="KW-0968">Cytoplasmic vesicle</keyword>
<keyword id="KW-0333">Golgi apparatus</keyword>
<keyword id="KW-0472">Membrane</keyword>
<keyword id="KW-1267">Proteomics identification</keyword>
<keyword id="KW-1185">Reference proteome</keyword>
<keyword id="KW-0770">Synapse</keyword>
<keyword id="KW-0812">Transmembrane</keyword>
<keyword id="KW-1133">Transmembrane helix</keyword>
<sequence length="185" mass="20648">MAAQKDQQKDAEAEGLSGTTLLPKLIPSGAGREWLERRRATIRPWSTFVDQQRFSRPRNLGELCQRLVRNVEYYQSNYVFVFLGLILYCVVTSPMLLVALAVFFGACYILYLRTLESKLVLFGREVSPAHQYALAGGISFPFFWLAGAGSAVFWVLGATLVVIGSHAAFHQIEAVDGEELQMEPV</sequence>
<name>PRAF1_HUMAN</name>
<reference key="1">
    <citation type="journal article" date="1999" name="Biochem. Biophys. Res. Commun.">
        <title>Interaction cloning and characterization of the cDNA encoding the human prenylated rab acceptor (PRA1).</title>
        <authorList>
            <person name="Bucci C."/>
            <person name="Chiariello M."/>
            <person name="Lattero D."/>
            <person name="Maiorano M."/>
            <person name="Bruni C.B."/>
        </authorList>
    </citation>
    <scope>NUCLEOTIDE SEQUENCE [MRNA]</scope>
    <scope>INTERACTION WITH RAB GTPASES</scope>
    <scope>SUBCELLULAR LOCATION</scope>
    <source>
        <tissue>Brain</tissue>
        <tissue>Placenta</tissue>
    </source>
</reference>
<reference key="2">
    <citation type="submission" date="1998-12" db="EMBL/GenBank/DDBJ databases">
        <title>A novel gene expressed in human hypothalamus.</title>
        <authorList>
            <person name="Jin W."/>
            <person name="Huang C."/>
            <person name="Wu T."/>
            <person name="Peng Y."/>
            <person name="Gu Y."/>
            <person name="Zhang L."/>
            <person name="Jiang C."/>
            <person name="Li Y."/>
            <person name="Han Z."/>
            <person name="Wang Y."/>
            <person name="Chen Z."/>
            <person name="Fu G."/>
        </authorList>
    </citation>
    <scope>NUCLEOTIDE SEQUENCE [MRNA]</scope>
    <source>
        <tissue>Hypothalamus</tissue>
    </source>
</reference>
<reference key="3">
    <citation type="submission" date="1998-12" db="EMBL/GenBank/DDBJ databases">
        <title>Cloning and characterization of a new human cDNA homologous to Rattus norvegicus prenylated rab acceptor 1 (PRA1) mRNA.</title>
        <authorList>
            <person name="Fu Q."/>
            <person name="Yu L."/>
            <person name="Yue P."/>
            <person name="Dai F.Y."/>
            <person name="Wang X.K."/>
            <person name="Zhao S.Y."/>
        </authorList>
    </citation>
    <scope>NUCLEOTIDE SEQUENCE [MRNA]</scope>
</reference>
<reference key="4">
    <citation type="submission" date="2004-06" db="EMBL/GenBank/DDBJ databases">
        <title>Cloning of human full open reading frames in Gateway(TM) system entry vector (pDONR201).</title>
        <authorList>
            <person name="Ebert L."/>
            <person name="Schick M."/>
            <person name="Neubert P."/>
            <person name="Schatten R."/>
            <person name="Henze S."/>
            <person name="Korn B."/>
        </authorList>
    </citation>
    <scope>NUCLEOTIDE SEQUENCE [LARGE SCALE MRNA]</scope>
</reference>
<reference key="5">
    <citation type="submission" date="2004-10" db="EMBL/GenBank/DDBJ databases">
        <title>Cloning of human full-length CDSs in BD Creator(TM) system donor vector.</title>
        <authorList>
            <person name="Kalnine N."/>
            <person name="Chen X."/>
            <person name="Rolfs A."/>
            <person name="Halleck A."/>
            <person name="Hines L."/>
            <person name="Eisenstein S."/>
            <person name="Koundinya M."/>
            <person name="Raphael J."/>
            <person name="Moreira D."/>
            <person name="Kelley T."/>
            <person name="LaBaer J."/>
            <person name="Lin Y."/>
            <person name="Phelan M."/>
            <person name="Farmer A."/>
        </authorList>
    </citation>
    <scope>NUCLEOTIDE SEQUENCE [LARGE SCALE MRNA]</scope>
</reference>
<reference key="6">
    <citation type="journal article" date="2004" name="Genome Res.">
        <title>The status, quality, and expansion of the NIH full-length cDNA project: the Mammalian Gene Collection (MGC).</title>
        <authorList>
            <consortium name="The MGC Project Team"/>
        </authorList>
    </citation>
    <scope>NUCLEOTIDE SEQUENCE [LARGE SCALE MRNA]</scope>
    <source>
        <tissue>Kidney</tissue>
    </source>
</reference>
<reference key="7">
    <citation type="journal article" date="2001" name="Biochem. Biophys. Res. Commun.">
        <title>Expression analysis and chromosomal assignment of PRA1 and RILP genes.</title>
        <authorList>
            <person name="Bucci C."/>
            <person name="De Gregorio L."/>
            <person name="Bruni C.B."/>
        </authorList>
    </citation>
    <scope>TISSUE SPECIFICITY</scope>
    <scope>DEVELOPMENTAL STAGE</scope>
</reference>
<reference key="8">
    <citation type="journal article" date="2005" name="Biochem. Biophys. Res. Commun.">
        <title>NDRG1 interacts with APO A-I and A-II and is a functional candidate for the HDL-C QTL on 8q24.</title>
        <authorList>
            <person name="Hunter M."/>
            <person name="Angelicheva D."/>
            <person name="Tournev I."/>
            <person name="Ingley E."/>
            <person name="Chan D.C."/>
            <person name="Watts G.F."/>
            <person name="Kremensky I."/>
            <person name="Kalaydjieva L."/>
        </authorList>
    </citation>
    <scope>INTERACTION WITH NDRG1</scope>
</reference>
<reference key="9">
    <citation type="journal article" date="2006" name="Gene">
        <title>Genomic organization, expression profile, and characterization of the new protein PRA1 domain family, member 2 (PRAF2).</title>
        <authorList>
            <person name="Fo C.S."/>
            <person name="Coleman C.S."/>
            <person name="Wallick C.J."/>
            <person name="Vine A.L."/>
            <person name="Bachmann A.S."/>
        </authorList>
    </citation>
    <scope>NOMENCLATURE</scope>
</reference>
<reference key="10">
    <citation type="journal article" date="2011" name="BMC Syst. Biol.">
        <title>Initial characterization of the human central proteome.</title>
        <authorList>
            <person name="Burkard T.R."/>
            <person name="Planyavsky M."/>
            <person name="Kaupe I."/>
            <person name="Breitwieser F.P."/>
            <person name="Buerckstuemmer T."/>
            <person name="Bennett K.L."/>
            <person name="Superti-Furga G."/>
            <person name="Colinge J."/>
        </authorList>
    </citation>
    <scope>IDENTIFICATION BY MASS SPECTROMETRY [LARGE SCALE ANALYSIS]</scope>
</reference>
<protein>
    <recommendedName>
        <fullName>Prenylated Rab acceptor protein 1</fullName>
    </recommendedName>
    <alternativeName>
        <fullName>PRA1 family protein 1</fullName>
    </alternativeName>
</protein>
<comment type="function">
    <text evidence="2">General Rab protein regulator required for vesicle formation from the Golgi complex. May control vesicle docking and fusion by mediating the action of Rab GTPases to the SNARE complexes. In addition it inhibits the removal of Rab GTPases from the membrane by GDI.</text>
</comment>
<comment type="subunit">
    <text evidence="1 4 6">Homodimer. Interacts with VAMP2 (synaptobrevin-2), GDI1, and PCLO (By similarity). Interacts specifically with prenylated Rab proteins; strongly with RAB4B, RAB5A and RAB5C, and weakly with RAB4A, RAB6, RAB7A, RAB17 and RAB22. Interacts with NDRG1.</text>
</comment>
<comment type="interaction">
    <interactant intactId="EBI-712367">
        <id>Q9UI14</id>
    </interactant>
    <interactant intactId="EBI-7131019">
        <id>Q8TB40</id>
        <label>ABHD4</label>
    </interactant>
    <organismsDiffer>false</organismsDiffer>
    <experiments>3</experiments>
</comment>
<comment type="interaction">
    <interactant intactId="EBI-712367">
        <id>Q9UI14</id>
    </interactant>
    <interactant intactId="EBI-719613">
        <id>O95873</id>
        <label>C6orf47</label>
    </interactant>
    <organismsDiffer>false</organismsDiffer>
    <experiments>3</experiments>
</comment>
<comment type="interaction">
    <interactant intactId="EBI-712367">
        <id>Q9UI14</id>
    </interactant>
    <interactant intactId="EBI-745535">
        <id>Q8NI60</id>
        <label>COQ8A</label>
    </interactant>
    <organismsDiffer>false</organismsDiffer>
    <experiments>12</experiments>
</comment>
<comment type="interaction">
    <interactant intactId="EBI-712367">
        <id>Q9UI14</id>
    </interactant>
    <interactant intactId="EBI-17233035">
        <id>Q9BUF7-2</id>
        <label>CRB3</label>
    </interactant>
    <organismsDiffer>false</organismsDiffer>
    <experiments>3</experiments>
</comment>
<comment type="interaction">
    <interactant intactId="EBI-712367">
        <id>Q9UI14</id>
    </interactant>
    <interactant intactId="EBI-8637742">
        <id>Q53TN4</id>
        <label>CYBRD1</label>
    </interactant>
    <organismsDiffer>false</organismsDiffer>
    <experiments>3</experiments>
</comment>
<comment type="interaction">
    <interactant intactId="EBI-712367">
        <id>Q9UI14</id>
    </interactant>
    <interactant intactId="EBI-21447212">
        <id>P11509</id>
        <label>CYP2A6</label>
    </interactant>
    <organismsDiffer>false</organismsDiffer>
    <experiments>2</experiments>
</comment>
<comment type="interaction">
    <interactant intactId="EBI-712367">
        <id>Q9UI14</id>
    </interactant>
    <interactant intactId="EBI-715161">
        <id>Q9UNI6</id>
        <label>DUSP12</label>
    </interactant>
    <organismsDiffer>false</organismsDiffer>
    <experiments>7</experiments>
</comment>
<comment type="interaction">
    <interactant intactId="EBI-712367">
        <id>Q9UI14</id>
    </interactant>
    <interactant intactId="EBI-2339413">
        <id>O14681</id>
        <label>EI24</label>
    </interactant>
    <organismsDiffer>false</organismsDiffer>
    <experiments>3</experiments>
</comment>
<comment type="interaction">
    <interactant intactId="EBI-712367">
        <id>Q9UI14</id>
    </interactant>
    <interactant intactId="EBI-4319440">
        <id>P54849</id>
        <label>EMP1</label>
    </interactant>
    <organismsDiffer>false</organismsDiffer>
    <experiments>3</experiments>
</comment>
<comment type="interaction">
    <interactant intactId="EBI-712367">
        <id>Q9UI14</id>
    </interactant>
    <interactant intactId="EBI-742600">
        <id>Q9Y624</id>
        <label>F11R</label>
    </interactant>
    <organismsDiffer>false</organismsDiffer>
    <experiments>3</experiments>
</comment>
<comment type="interaction">
    <interactant intactId="EBI-712367">
        <id>Q9UI14</id>
    </interactant>
    <interactant intactId="EBI-713291">
        <id>P51114</id>
        <label>FXR1</label>
    </interactant>
    <organismsDiffer>false</organismsDiffer>
    <experiments>2</experiments>
</comment>
<comment type="interaction">
    <interactant intactId="EBI-712367">
        <id>Q9UI14</id>
    </interactant>
    <interactant intactId="EBI-740459">
        <id>P51116</id>
        <label>FXR2</label>
    </interactant>
    <organismsDiffer>false</organismsDiffer>
    <experiments>3</experiments>
</comment>
<comment type="interaction">
    <interactant intactId="EBI-712367">
        <id>Q9UI14</id>
    </interactant>
    <interactant intactId="EBI-13345167">
        <id>Q8TDT2</id>
        <label>GPR152</label>
    </interactant>
    <organismsDiffer>false</organismsDiffer>
    <experiments>3</experiments>
</comment>
<comment type="interaction">
    <interactant intactId="EBI-712367">
        <id>Q9UI14</id>
    </interactant>
    <interactant intactId="EBI-18053395">
        <id>Q7Z5P4</id>
        <label>HSD17B13</label>
    </interactant>
    <organismsDiffer>false</organismsDiffer>
    <experiments>3</experiments>
</comment>
<comment type="interaction">
    <interactant intactId="EBI-712367">
        <id>Q9UI14</id>
    </interactant>
    <interactant intactId="EBI-2561428">
        <id>Q9Y2U8</id>
        <label>LEMD3</label>
    </interactant>
    <organismsDiffer>false</organismsDiffer>
    <experiments>3</experiments>
</comment>
<comment type="interaction">
    <interactant intactId="EBI-712367">
        <id>Q9UI14</id>
    </interactant>
    <interactant intactId="EBI-3509981">
        <id>P36941</id>
        <label>LTBR</label>
    </interactant>
    <organismsDiffer>false</organismsDiffer>
    <experiments>3</experiments>
</comment>
<comment type="interaction">
    <interactant intactId="EBI-712367">
        <id>Q9UI14</id>
    </interactant>
    <interactant intactId="EBI-750153">
        <id>Q96C03</id>
        <label>MIEF2</label>
    </interactant>
    <organismsDiffer>false</organismsDiffer>
    <experiments>3</experiments>
</comment>
<comment type="interaction">
    <interactant intactId="EBI-712367">
        <id>Q9UI14</id>
    </interactant>
    <interactant intactId="EBI-11988931">
        <id>Q96C03-3</id>
        <label>MIEF2</label>
    </interactant>
    <organismsDiffer>false</organismsDiffer>
    <experiments>3</experiments>
</comment>
<comment type="interaction">
    <interactant intactId="EBI-712367">
        <id>Q9UI14</id>
    </interactant>
    <interactant intactId="EBI-8084503">
        <id>Q9UN36-1</id>
        <label>NDRG2</label>
    </interactant>
    <organismsDiffer>false</organismsDiffer>
    <experiments>7</experiments>
</comment>
<comment type="interaction">
    <interactant intactId="EBI-712367">
        <id>Q9UI14</id>
    </interactant>
    <interactant intactId="EBI-10323810">
        <id>Q9ULP0</id>
        <label>NDRG4</label>
    </interactant>
    <organismsDiffer>false</organismsDiffer>
    <experiments>3</experiments>
</comment>
<comment type="interaction">
    <interactant intactId="EBI-712367">
        <id>Q9UI14</id>
    </interactant>
    <interactant intactId="EBI-11978907">
        <id>Q9ULP0-2</id>
        <label>NDRG4</label>
    </interactant>
    <organismsDiffer>false</organismsDiffer>
    <experiments>3</experiments>
</comment>
<comment type="interaction">
    <interactant intactId="EBI-712367">
        <id>Q9UI14</id>
    </interactant>
    <interactant intactId="EBI-740897">
        <id>Q9GZT8</id>
        <label>NIF3L1</label>
    </interactant>
    <organismsDiffer>false</organismsDiffer>
    <experiments>3</experiments>
</comment>
<comment type="interaction">
    <interactant intactId="EBI-712367">
        <id>Q9UI14</id>
    </interactant>
    <interactant intactId="EBI-741158">
        <id>Q96HA8</id>
        <label>NTAQ1</label>
    </interactant>
    <organismsDiffer>false</organismsDiffer>
    <experiments>9</experiments>
</comment>
<comment type="interaction">
    <interactant intactId="EBI-712367">
        <id>Q9UI14</id>
    </interactant>
    <interactant intactId="EBI-740486">
        <id>Q6ZVK8</id>
        <label>NUDT18</label>
    </interactant>
    <organismsDiffer>false</organismsDiffer>
    <experiments>3</experiments>
</comment>
<comment type="interaction">
    <interactant intactId="EBI-712367">
        <id>Q9UI14</id>
    </interactant>
    <interactant intactId="EBI-741171">
        <id>Q96AL5</id>
        <label>PBX3</label>
    </interactant>
    <organismsDiffer>false</organismsDiffer>
    <experiments>5</experiments>
</comment>
<comment type="interaction">
    <interactant intactId="EBI-712367">
        <id>Q9UI14</id>
    </interactant>
    <interactant intactId="EBI-742388">
        <id>Q9H8W4</id>
        <label>PLEKHF2</label>
    </interactant>
    <organismsDiffer>false</organismsDiffer>
    <experiments>3</experiments>
</comment>
<comment type="interaction">
    <interactant intactId="EBI-712367">
        <id>Q9UI14</id>
    </interactant>
    <interactant intactId="EBI-744685">
        <id>Q14088</id>
        <label>RAB33A</label>
    </interactant>
    <organismsDiffer>false</organismsDiffer>
    <experiments>3</experiments>
</comment>
<comment type="interaction">
    <interactant intactId="EBI-712367">
        <id>Q9UI14</id>
    </interactant>
    <interactant intactId="EBI-712367">
        <id>Q9UI14</id>
        <label>RABAC1</label>
    </interactant>
    <organismsDiffer>false</organismsDiffer>
    <experiments>6</experiments>
</comment>
<comment type="interaction">
    <interactant intactId="EBI-712367">
        <id>Q9UI14</id>
    </interactant>
    <interactant intactId="EBI-11337973">
        <id>Q9BRK0</id>
        <label>REEP2</label>
    </interactant>
    <organismsDiffer>false</organismsDiffer>
    <experiments>3</experiments>
</comment>
<comment type="interaction">
    <interactant intactId="EBI-712367">
        <id>Q9UI14</id>
    </interactant>
    <interactant intactId="EBI-1549827">
        <id>Q00765</id>
        <label>REEP5</label>
    </interactant>
    <organismsDiffer>false</organismsDiffer>
    <experiments>6</experiments>
</comment>
<comment type="interaction">
    <interactant intactId="EBI-712367">
        <id>Q9UI14</id>
    </interactant>
    <interactant intactId="EBI-10192441">
        <id>Q86VR2</id>
        <label>RETREG3</label>
    </interactant>
    <organismsDiffer>false</organismsDiffer>
    <experiments>3</experiments>
</comment>
<comment type="interaction">
    <interactant intactId="EBI-712367">
        <id>Q9UI14</id>
    </interactant>
    <interactant intactId="EBI-9091816">
        <id>Q9NPQ8-4</id>
        <label>RIC8A</label>
    </interactant>
    <organismsDiffer>false</organismsDiffer>
    <experiments>3</experiments>
</comment>
<comment type="interaction">
    <interactant intactId="EBI-712367">
        <id>Q9UI14</id>
    </interactant>
    <interactant intactId="EBI-348482">
        <id>Q99942</id>
        <label>RNF5</label>
    </interactant>
    <organismsDiffer>false</organismsDiffer>
    <experiments>3</experiments>
</comment>
<comment type="interaction">
    <interactant intactId="EBI-712367">
        <id>Q9UI14</id>
    </interactant>
    <interactant intactId="EBI-16432654">
        <id>A8MRB1</id>
        <label>S100B</label>
    </interactant>
    <organismsDiffer>false</organismsDiffer>
    <experiments>3</experiments>
</comment>
<comment type="interaction">
    <interactant intactId="EBI-712367">
        <id>Q9UI14</id>
    </interactant>
    <interactant intactId="EBI-6503765">
        <id>Q8IVP1</id>
        <label>SH3GL3</label>
    </interactant>
    <organismsDiffer>false</organismsDiffer>
    <experiments>3</experiments>
</comment>
<comment type="interaction">
    <interactant intactId="EBI-712367">
        <id>Q9UI14</id>
    </interactant>
    <interactant intactId="EBI-2623095">
        <id>Q9Y371</id>
        <label>SH3GLB1</label>
    </interactant>
    <organismsDiffer>false</organismsDiffer>
    <experiments>3</experiments>
</comment>
<comment type="interaction">
    <interactant intactId="EBI-712367">
        <id>Q9UI14</id>
    </interactant>
    <interactant intactId="EBI-14058448">
        <id>Q96DU3</id>
        <label>SLAMF6</label>
    </interactant>
    <organismsDiffer>false</organismsDiffer>
    <experiments>3</experiments>
</comment>
<comment type="interaction">
    <interactant intactId="EBI-712367">
        <id>Q9UI14</id>
    </interactant>
    <interactant intactId="EBI-985879">
        <id>P37840</id>
        <label>SNCA</label>
    </interactant>
    <organismsDiffer>false</organismsDiffer>
    <experiments>4</experiments>
</comment>
<comment type="interaction">
    <interactant intactId="EBI-712367">
        <id>Q9UI14</id>
    </interactant>
    <interactant intactId="EBI-2822329">
        <id>Q13596</id>
        <label>SNX1</label>
    </interactant>
    <organismsDiffer>false</organismsDiffer>
    <experiments>3</experiments>
</comment>
<comment type="interaction">
    <interactant intactId="EBI-712367">
        <id>Q9UI14</id>
    </interactant>
    <interactant intactId="EBI-10266928">
        <id>Q8N5Z3</id>
        <label>SNX10</label>
    </interactant>
    <organismsDiffer>false</organismsDiffer>
    <experiments>3</experiments>
</comment>
<comment type="interaction">
    <interactant intactId="EBI-712367">
        <id>Q9UI14</id>
    </interactant>
    <interactant intactId="EBI-10329478">
        <id>Q9Y5X0</id>
        <label>SNX10</label>
    </interactant>
    <organismsDiffer>false</organismsDiffer>
    <experiments>3</experiments>
</comment>
<comment type="interaction">
    <interactant intactId="EBI-712367">
        <id>Q9UI14</id>
    </interactant>
    <interactant intactId="EBI-10329449">
        <id>Q9Y5W9</id>
        <label>SNX11</label>
    </interactant>
    <organismsDiffer>false</organismsDiffer>
    <experiments>6</experiments>
</comment>
<comment type="interaction">
    <interactant intactId="EBI-712367">
        <id>Q9UI14</id>
    </interactant>
    <interactant intactId="EBI-725924">
        <id>Q9NRS6</id>
        <label>SNX15</label>
    </interactant>
    <organismsDiffer>false</organismsDiffer>
    <experiments>4</experiments>
</comment>
<comment type="interaction">
    <interactant intactId="EBI-712367">
        <id>Q9UI14</id>
    </interactant>
    <interactant intactId="EBI-1752620">
        <id>Q15036</id>
        <label>SNX17</label>
    </interactant>
    <organismsDiffer>false</organismsDiffer>
    <experiments>3</experiments>
</comment>
<comment type="interaction">
    <interactant intactId="EBI-712367">
        <id>Q9UI14</id>
    </interactant>
    <interactant intactId="EBI-1752557">
        <id>Q9Y5X2</id>
        <label>SNX8</label>
    </interactant>
    <organismsDiffer>false</organismsDiffer>
    <experiments>3</experiments>
</comment>
<comment type="interaction">
    <interactant intactId="EBI-712367">
        <id>Q9UI14</id>
    </interactant>
    <interactant intactId="EBI-742688">
        <id>Q9NZD8</id>
        <label>SPG21</label>
    </interactant>
    <organismsDiffer>false</organismsDiffer>
    <experiments>7</experiments>
</comment>
<comment type="interaction">
    <interactant intactId="EBI-712367">
        <id>Q9UI14</id>
    </interactant>
    <interactant intactId="EBI-1043938">
        <id>Q9UNL2</id>
        <label>SSR3</label>
    </interactant>
    <organismsDiffer>false</organismsDiffer>
    <experiments>3</experiments>
</comment>
<comment type="interaction">
    <interactant intactId="EBI-712367">
        <id>Q9UI14</id>
    </interactant>
    <interactant intactId="EBI-448878">
        <id>Q13586</id>
        <label>STIM1</label>
    </interactant>
    <organismsDiffer>false</organismsDiffer>
    <experiments>3</experiments>
</comment>
<comment type="interaction">
    <interactant intactId="EBI-712367">
        <id>Q9UI14</id>
    </interactant>
    <interactant intactId="EBI-1044428">
        <id>Q9UJZ1</id>
        <label>STOML2</label>
    </interactant>
    <organismsDiffer>false</organismsDiffer>
    <experiments>3</experiments>
</comment>
<comment type="interaction">
    <interactant intactId="EBI-712367">
        <id>Q9UI14</id>
    </interactant>
    <interactant intactId="EBI-10238936">
        <id>Q17RD7</id>
        <label>SYT16</label>
    </interactant>
    <organismsDiffer>false</organismsDiffer>
    <experiments>8</experiments>
</comment>
<comment type="interaction">
    <interactant intactId="EBI-712367">
        <id>Q9UI14</id>
    </interactant>
    <interactant intactId="EBI-8633987">
        <id>Q12893</id>
        <label>TMEM115</label>
    </interactant>
    <organismsDiffer>false</organismsDiffer>
    <experiments>3</experiments>
</comment>
<comment type="interaction">
    <interactant intactId="EBI-712367">
        <id>Q9UI14</id>
    </interactant>
    <interactant intactId="EBI-8638294">
        <id>Q9NUH8</id>
        <label>TMEM14B</label>
    </interactant>
    <organismsDiffer>false</organismsDiffer>
    <experiments>3</experiments>
</comment>
<comment type="interaction">
    <interactant intactId="EBI-712367">
        <id>Q9UI14</id>
    </interactant>
    <interactant intactId="EBI-12038591">
        <id>Q69YG0</id>
        <label>TMEM42</label>
    </interactant>
    <organismsDiffer>false</organismsDiffer>
    <experiments>3</experiments>
</comment>
<comment type="interaction">
    <interactant intactId="EBI-712367">
        <id>Q9UI14</id>
    </interactant>
    <interactant intactId="EBI-6447886">
        <id>Q9Y320</id>
        <label>TMX2</label>
    </interactant>
    <organismsDiffer>false</organismsDiffer>
    <experiments>3</experiments>
</comment>
<comment type="interaction">
    <interactant intactId="EBI-712367">
        <id>Q9UI14</id>
    </interactant>
    <interactant intactId="EBI-742790">
        <id>Q13049</id>
        <label>TRIM32</label>
    </interactant>
    <organismsDiffer>false</organismsDiffer>
    <experiments>10</experiments>
</comment>
<comment type="interaction">
    <interactant intactId="EBI-712367">
        <id>Q9UI14</id>
    </interactant>
    <interactant intactId="EBI-10180829">
        <id>Q7KZS0</id>
        <label>UBE2I</label>
    </interactant>
    <organismsDiffer>false</organismsDiffer>
    <experiments>3</experiments>
</comment>
<comment type="interaction">
    <interactant intactId="EBI-712367">
        <id>Q9UI14</id>
    </interactant>
    <interactant intactId="EBI-719396">
        <id>Q9Y4P8</id>
        <label>WIPI2</label>
    </interactant>
    <organismsDiffer>false</organismsDiffer>
    <experiments>3</experiments>
</comment>
<comment type="interaction">
    <interactant intactId="EBI-712367">
        <id>Q9UI14</id>
    </interactant>
    <interactant intactId="EBI-12205107">
        <id>Q9Y4P8-4</id>
        <label>WIPI2</label>
    </interactant>
    <organismsDiffer>false</organismsDiffer>
    <experiments>3</experiments>
</comment>
<comment type="interaction">
    <interactant intactId="EBI-712367">
        <id>Q9UI14</id>
    </interactant>
    <interactant intactId="EBI-2849569">
        <id>Q9BQ24</id>
        <label>ZFYVE21</label>
    </interactant>
    <organismsDiffer>false</organismsDiffer>
    <experiments>6</experiments>
</comment>
<comment type="interaction">
    <interactant intactId="EBI-712367">
        <id>Q9UI14</id>
    </interactant>
    <interactant intactId="EBI-6973030">
        <id>P03230</id>
        <label>LMP1</label>
    </interactant>
    <organismsDiffer>true</organismsDiffer>
    <experiments>9</experiments>
</comment>
<comment type="subcellular location">
    <subcellularLocation>
        <location evidence="2">Cell membrane</location>
        <topology evidence="3">Multi-pass membrane protein</topology>
    </subcellularLocation>
    <subcellularLocation>
        <location evidence="2">Cytoplasm</location>
    </subcellularLocation>
    <subcellularLocation>
        <location evidence="2">Golgi apparatus</location>
    </subcellularLocation>
    <subcellularLocation>
        <location evidence="2">Cytoplasmic vesicle</location>
        <location evidence="2">Secretory vesicle</location>
        <location evidence="2">Synaptic vesicle</location>
    </subcellularLocation>
    <text evidence="2">According to some authors, it is an integral membrane protein, while others showed that it is cytoplasmic and membrane-associated to Golgi and synaptic vesicles.</text>
</comment>
<comment type="tissue specificity">
    <text evidence="5">Ubiquitous. Strongest expression found in placenta, pituitary gland, kidney, lung and stomach.</text>
</comment>
<comment type="developmental stage">
    <text evidence="5">In fetal tissues, it is more abundant in kidney and lung.</text>
</comment>
<comment type="similarity">
    <text evidence="7">Belongs to the PRA1 family.</text>
</comment>
<comment type="caution">
    <text evidence="7">In contrast to the mouse ortholog, it does not interact with Ras.</text>
</comment>
<evidence type="ECO:0000250" key="1"/>
<evidence type="ECO:0000250" key="2">
    <source>
        <dbReference type="UniProtKB" id="O35394"/>
    </source>
</evidence>
<evidence type="ECO:0000255" key="3"/>
<evidence type="ECO:0000269" key="4">
    <source>
    </source>
</evidence>
<evidence type="ECO:0000269" key="5">
    <source>
    </source>
</evidence>
<evidence type="ECO:0000269" key="6">
    <source>
    </source>
</evidence>
<evidence type="ECO:0000305" key="7"/>
<feature type="chain" id="PRO_0000220878" description="Prenylated Rab acceptor protein 1">
    <location>
        <begin position="1"/>
        <end position="185"/>
    </location>
</feature>
<feature type="topological domain" description="Cytoplasmic" evidence="1">
    <location>
        <begin position="1"/>
        <end position="78"/>
    </location>
</feature>
<feature type="transmembrane region" description="Helical" evidence="1">
    <location>
        <begin position="79"/>
        <end position="94"/>
    </location>
</feature>
<feature type="transmembrane region" description="Helical" evidence="1">
    <location>
        <begin position="95"/>
        <end position="112"/>
    </location>
</feature>
<feature type="topological domain" description="Cytoplasmic" evidence="1">
    <location>
        <begin position="113"/>
        <end position="131"/>
    </location>
</feature>
<feature type="transmembrane region" description="Helical" evidence="1">
    <location>
        <begin position="132"/>
        <end position="148"/>
    </location>
</feature>
<feature type="transmembrane region" description="Helical" evidence="1">
    <location>
        <begin position="149"/>
        <end position="165"/>
    </location>
</feature>
<feature type="topological domain" description="Cytoplasmic" evidence="1">
    <location>
        <begin position="166"/>
        <end position="185"/>
    </location>
</feature>
<feature type="region of interest" description="Required for interaction with prenylated RAB3A and VAMP2" evidence="1">
    <location>
        <begin position="30"/>
        <end position="54"/>
    </location>
</feature>
<feature type="region of interest" description="Required for interaction with GDI1" evidence="1">
    <location>
        <begin position="165"/>
        <end position="185"/>
    </location>
</feature>
<feature type="region of interest" description="Homodimerization" evidence="1">
    <location>
        <begin position="175"/>
        <end position="185"/>
    </location>
</feature>
<feature type="region of interest" description="Required for interaction with prenylated RAB3A and VAMP2" evidence="1">
    <location>
        <begin position="175"/>
        <end position="185"/>
    </location>
</feature>
<feature type="sequence conflict" description="In Ref. 3; AAP97229." evidence="7" ref="3">
    <location>
        <position position="2"/>
    </location>
</feature>
<feature type="sequence conflict" description="In Ref. 3; AAP97229." evidence="7" ref="3">
    <original>AT</original>
    <variation>GP</variation>
    <location>
        <begin position="40"/>
        <end position="41"/>
    </location>
</feature>
<feature type="sequence conflict" description="In Ref. 1; CAB43107." evidence="7" ref="1">
    <original>A</original>
    <variation>E</variation>
    <location>
        <position position="129"/>
    </location>
</feature>
<dbReference type="EMBL" id="AJ133534">
    <property type="protein sequence ID" value="CAB43107.1"/>
    <property type="molecule type" value="mRNA"/>
</dbReference>
<dbReference type="EMBL" id="AF112202">
    <property type="protein sequence ID" value="AAF17190.1"/>
    <property type="molecule type" value="mRNA"/>
</dbReference>
<dbReference type="EMBL" id="AF112996">
    <property type="protein sequence ID" value="AAP97229.1"/>
    <property type="molecule type" value="mRNA"/>
</dbReference>
<dbReference type="EMBL" id="CR457214">
    <property type="protein sequence ID" value="CAG33495.1"/>
    <property type="molecule type" value="mRNA"/>
</dbReference>
<dbReference type="EMBL" id="CR542116">
    <property type="protein sequence ID" value="CAG46913.1"/>
    <property type="molecule type" value="mRNA"/>
</dbReference>
<dbReference type="EMBL" id="BT019964">
    <property type="protein sequence ID" value="AAV38767.1"/>
    <property type="molecule type" value="mRNA"/>
</dbReference>
<dbReference type="EMBL" id="BC008950">
    <property type="protein sequence ID" value="AAH08950.1"/>
    <property type="molecule type" value="mRNA"/>
</dbReference>
<dbReference type="CCDS" id="CCDS12593.1"/>
<dbReference type="RefSeq" id="NP_006414.2">
    <property type="nucleotide sequence ID" value="NM_006423.3"/>
</dbReference>
<dbReference type="BioGRID" id="115818">
    <property type="interactions" value="145"/>
</dbReference>
<dbReference type="FunCoup" id="Q9UI14">
    <property type="interactions" value="779"/>
</dbReference>
<dbReference type="IntAct" id="Q9UI14">
    <property type="interactions" value="118"/>
</dbReference>
<dbReference type="MINT" id="Q9UI14"/>
<dbReference type="STRING" id="9606.ENSP00000222008"/>
<dbReference type="TCDB" id="9.A.49.1.1">
    <property type="family name" value="the prenylated rab acceptor protein 1 (pra1) family"/>
</dbReference>
<dbReference type="iPTMnet" id="Q9UI14"/>
<dbReference type="PhosphoSitePlus" id="Q9UI14"/>
<dbReference type="SwissPalm" id="Q9UI14"/>
<dbReference type="BioMuta" id="RABAC1"/>
<dbReference type="DMDM" id="56404978"/>
<dbReference type="jPOST" id="Q9UI14"/>
<dbReference type="MassIVE" id="Q9UI14"/>
<dbReference type="PaxDb" id="9606-ENSP00000222008"/>
<dbReference type="PeptideAtlas" id="Q9UI14"/>
<dbReference type="ProteomicsDB" id="84453"/>
<dbReference type="Pumba" id="Q9UI14"/>
<dbReference type="TopDownProteomics" id="Q9UI14"/>
<dbReference type="Antibodypedia" id="30866">
    <property type="antibodies" value="63 antibodies from 24 providers"/>
</dbReference>
<dbReference type="DNASU" id="10567"/>
<dbReference type="Ensembl" id="ENST00000222008.11">
    <property type="protein sequence ID" value="ENSP00000222008.5"/>
    <property type="gene ID" value="ENSG00000105404.11"/>
</dbReference>
<dbReference type="GeneID" id="10567"/>
<dbReference type="KEGG" id="hsa:10567"/>
<dbReference type="MANE-Select" id="ENST00000222008.11">
    <property type="protein sequence ID" value="ENSP00000222008.5"/>
    <property type="RefSeq nucleotide sequence ID" value="NM_006423.3"/>
    <property type="RefSeq protein sequence ID" value="NP_006414.2"/>
</dbReference>
<dbReference type="UCSC" id="uc002osf.4">
    <property type="organism name" value="human"/>
</dbReference>
<dbReference type="AGR" id="HGNC:9794"/>
<dbReference type="CTD" id="10567"/>
<dbReference type="DisGeNET" id="10567"/>
<dbReference type="GeneCards" id="RABAC1"/>
<dbReference type="HGNC" id="HGNC:9794">
    <property type="gene designation" value="RABAC1"/>
</dbReference>
<dbReference type="HPA" id="ENSG00000105404">
    <property type="expression patterns" value="Low tissue specificity"/>
</dbReference>
<dbReference type="MIM" id="604925">
    <property type="type" value="gene"/>
</dbReference>
<dbReference type="neXtProt" id="NX_Q9UI14"/>
<dbReference type="OpenTargets" id="ENSG00000105404"/>
<dbReference type="PharmGKB" id="PA34155"/>
<dbReference type="VEuPathDB" id="HostDB:ENSG00000105404"/>
<dbReference type="eggNOG" id="KOG3142">
    <property type="taxonomic scope" value="Eukaryota"/>
</dbReference>
<dbReference type="GeneTree" id="ENSGT00390000010549"/>
<dbReference type="HOGENOM" id="CLU_103851_0_2_1"/>
<dbReference type="InParanoid" id="Q9UI14"/>
<dbReference type="OMA" id="FHQIEPA"/>
<dbReference type="OrthoDB" id="63113at2759"/>
<dbReference type="PAN-GO" id="Q9UI14">
    <property type="GO annotations" value="1 GO annotation based on evolutionary models"/>
</dbReference>
<dbReference type="PhylomeDB" id="Q9UI14"/>
<dbReference type="TreeFam" id="TF324857"/>
<dbReference type="PathwayCommons" id="Q9UI14"/>
<dbReference type="SignaLink" id="Q9UI14"/>
<dbReference type="BioGRID-ORCS" id="10567">
    <property type="hits" value="16 hits in 1155 CRISPR screens"/>
</dbReference>
<dbReference type="GeneWiki" id="RABAC1"/>
<dbReference type="GenomeRNAi" id="10567"/>
<dbReference type="Pharos" id="Q9UI14">
    <property type="development level" value="Tbio"/>
</dbReference>
<dbReference type="PRO" id="PR:Q9UI14"/>
<dbReference type="Proteomes" id="UP000005640">
    <property type="component" value="Chromosome 19"/>
</dbReference>
<dbReference type="RNAct" id="Q9UI14">
    <property type="molecule type" value="protein"/>
</dbReference>
<dbReference type="Bgee" id="ENSG00000105404">
    <property type="expression patterns" value="Expressed in thoracic aorta and 97 other cell types or tissues"/>
</dbReference>
<dbReference type="ExpressionAtlas" id="Q9UI14">
    <property type="expression patterns" value="baseline and differential"/>
</dbReference>
<dbReference type="GO" id="GO:0098978">
    <property type="term" value="C:glutamatergic synapse"/>
    <property type="evidence" value="ECO:0007669"/>
    <property type="project" value="Ensembl"/>
</dbReference>
<dbReference type="GO" id="GO:0005794">
    <property type="term" value="C:Golgi apparatus"/>
    <property type="evidence" value="ECO:0000318"/>
    <property type="project" value="GO_Central"/>
</dbReference>
<dbReference type="GO" id="GO:0016020">
    <property type="term" value="C:membrane"/>
    <property type="evidence" value="ECO:0007005"/>
    <property type="project" value="UniProtKB"/>
</dbReference>
<dbReference type="GO" id="GO:0005886">
    <property type="term" value="C:plasma membrane"/>
    <property type="evidence" value="ECO:0007669"/>
    <property type="project" value="UniProtKB-SubCell"/>
</dbReference>
<dbReference type="GO" id="GO:0008021">
    <property type="term" value="C:synaptic vesicle"/>
    <property type="evidence" value="ECO:0007669"/>
    <property type="project" value="UniProtKB-SubCell"/>
</dbReference>
<dbReference type="GO" id="GO:0051020">
    <property type="term" value="F:GTPase binding"/>
    <property type="evidence" value="ECO:0007669"/>
    <property type="project" value="Ensembl"/>
</dbReference>
<dbReference type="GO" id="GO:0042802">
    <property type="term" value="F:identical protein binding"/>
    <property type="evidence" value="ECO:0000353"/>
    <property type="project" value="IntAct"/>
</dbReference>
<dbReference type="GO" id="GO:0070064">
    <property type="term" value="F:proline-rich region binding"/>
    <property type="evidence" value="ECO:0007669"/>
    <property type="project" value="Ensembl"/>
</dbReference>
<dbReference type="InterPro" id="IPR004895">
    <property type="entry name" value="Prenylated_rab_accept_PRA1"/>
</dbReference>
<dbReference type="PANTHER" id="PTHR19317">
    <property type="entry name" value="PRENYLATED RAB ACCEPTOR 1-RELATED"/>
    <property type="match status" value="1"/>
</dbReference>
<dbReference type="PANTHER" id="PTHR19317:SF0">
    <property type="entry name" value="PRENYLATED RAB ACCEPTOR PROTEIN 1"/>
    <property type="match status" value="1"/>
</dbReference>
<dbReference type="Pfam" id="PF03208">
    <property type="entry name" value="PRA1"/>
    <property type="match status" value="1"/>
</dbReference>
<proteinExistence type="evidence at protein level"/>